<feature type="chain" id="PRO_1000184631" description="ATP synthase subunit delta">
    <location>
        <begin position="1"/>
        <end position="178"/>
    </location>
</feature>
<feature type="helix" evidence="2">
    <location>
        <begin position="4"/>
        <end position="7"/>
    </location>
</feature>
<feature type="helix" evidence="2">
    <location>
        <begin position="9"/>
        <end position="22"/>
    </location>
</feature>
<feature type="helix" evidence="2">
    <location>
        <begin position="25"/>
        <end position="40"/>
    </location>
</feature>
<feature type="helix" evidence="2">
    <location>
        <begin position="42"/>
        <end position="48"/>
    </location>
</feature>
<feature type="helix" evidence="2">
    <location>
        <begin position="55"/>
        <end position="66"/>
    </location>
</feature>
<feature type="helix" evidence="2">
    <location>
        <begin position="72"/>
        <end position="83"/>
    </location>
</feature>
<feature type="helix" evidence="2">
    <location>
        <begin position="87"/>
        <end position="89"/>
    </location>
</feature>
<feature type="helix" evidence="2">
    <location>
        <begin position="90"/>
        <end position="104"/>
    </location>
</feature>
<feature type="strand" evidence="2">
    <location>
        <begin position="108"/>
        <end position="116"/>
    </location>
</feature>
<feature type="helix" evidence="2">
    <location>
        <begin position="120"/>
        <end position="130"/>
    </location>
</feature>
<feature type="helix" evidence="2">
    <location>
        <begin position="131"/>
        <end position="133"/>
    </location>
</feature>
<feature type="strand" evidence="2">
    <location>
        <begin position="138"/>
        <end position="144"/>
    </location>
</feature>
<feature type="strand" evidence="2">
    <location>
        <begin position="153"/>
        <end position="156"/>
    </location>
</feature>
<feature type="strand" evidence="2">
    <location>
        <begin position="159"/>
        <end position="161"/>
    </location>
</feature>
<feature type="helix" evidence="2">
    <location>
        <begin position="166"/>
        <end position="175"/>
    </location>
</feature>
<accession>A3M141</accession>
<gene>
    <name evidence="1" type="primary">atpH</name>
    <name type="ordered locus">A1S_0152</name>
</gene>
<organism>
    <name type="scientific">Acinetobacter baumannii (strain ATCC 17978 / DSM 105126 / CIP 53.77 / LMG 1025 / NCDC KC755 / 5377)</name>
    <dbReference type="NCBI Taxonomy" id="400667"/>
    <lineage>
        <taxon>Bacteria</taxon>
        <taxon>Pseudomonadati</taxon>
        <taxon>Pseudomonadota</taxon>
        <taxon>Gammaproteobacteria</taxon>
        <taxon>Moraxellales</taxon>
        <taxon>Moraxellaceae</taxon>
        <taxon>Acinetobacter</taxon>
        <taxon>Acinetobacter calcoaceticus/baumannii complex</taxon>
    </lineage>
</organism>
<name>ATPD_ACIBT</name>
<reference key="1">
    <citation type="journal article" date="2007" name="Genes Dev.">
        <title>New insights into Acinetobacter baumannii pathogenesis revealed by high-density pyrosequencing and transposon mutagenesis.</title>
        <authorList>
            <person name="Smith M.G."/>
            <person name="Gianoulis T.A."/>
            <person name="Pukatzki S."/>
            <person name="Mekalanos J.J."/>
            <person name="Ornston L.N."/>
            <person name="Gerstein M."/>
            <person name="Snyder M."/>
        </authorList>
    </citation>
    <scope>NUCLEOTIDE SEQUENCE [LARGE SCALE GENOMIC DNA]</scope>
    <source>
        <strain>ATCC 17978 / DSM 105126 / CIP 53.77 / LMG 1025 / NCDC KC755 / 5377</strain>
    </source>
</reference>
<dbReference type="EMBL" id="CP000521">
    <property type="protein sequence ID" value="ABO10635.2"/>
    <property type="molecule type" value="Genomic_DNA"/>
</dbReference>
<dbReference type="RefSeq" id="WP_000818995.1">
    <property type="nucleotide sequence ID" value="NZ_CP053098.1"/>
</dbReference>
<dbReference type="PDB" id="7P2Y">
    <property type="method" value="EM"/>
    <property type="resolution" value="3.10 A"/>
    <property type="chains" value="d=1-178"/>
</dbReference>
<dbReference type="PDB" id="7P3N">
    <property type="method" value="EM"/>
    <property type="resolution" value="4.60 A"/>
    <property type="chains" value="d=1-178"/>
</dbReference>
<dbReference type="PDB" id="7P3W">
    <property type="method" value="EM"/>
    <property type="resolution" value="4.30 A"/>
    <property type="chains" value="d=1-178"/>
</dbReference>
<dbReference type="PDBsum" id="7P2Y"/>
<dbReference type="PDBsum" id="7P3N"/>
<dbReference type="PDBsum" id="7P3W"/>
<dbReference type="EMDB" id="EMD-13174"/>
<dbReference type="EMDB" id="EMD-13181"/>
<dbReference type="EMDB" id="EMD-13186"/>
<dbReference type="SMR" id="A3M141"/>
<dbReference type="KEGG" id="acb:A1S_0152"/>
<dbReference type="HOGENOM" id="CLU_085114_3_0_6"/>
<dbReference type="GO" id="GO:0005886">
    <property type="term" value="C:plasma membrane"/>
    <property type="evidence" value="ECO:0007669"/>
    <property type="project" value="UniProtKB-SubCell"/>
</dbReference>
<dbReference type="GO" id="GO:0045259">
    <property type="term" value="C:proton-transporting ATP synthase complex"/>
    <property type="evidence" value="ECO:0007669"/>
    <property type="project" value="UniProtKB-KW"/>
</dbReference>
<dbReference type="GO" id="GO:0046933">
    <property type="term" value="F:proton-transporting ATP synthase activity, rotational mechanism"/>
    <property type="evidence" value="ECO:0007669"/>
    <property type="project" value="UniProtKB-UniRule"/>
</dbReference>
<dbReference type="Gene3D" id="1.10.520.20">
    <property type="entry name" value="N-terminal domain of the delta subunit of the F1F0-ATP synthase"/>
    <property type="match status" value="1"/>
</dbReference>
<dbReference type="HAMAP" id="MF_01416">
    <property type="entry name" value="ATP_synth_delta_bact"/>
    <property type="match status" value="1"/>
</dbReference>
<dbReference type="InterPro" id="IPR026015">
    <property type="entry name" value="ATP_synth_OSCP/delta_N_sf"/>
</dbReference>
<dbReference type="InterPro" id="IPR020781">
    <property type="entry name" value="ATPase_OSCP/d_CS"/>
</dbReference>
<dbReference type="InterPro" id="IPR000711">
    <property type="entry name" value="ATPase_OSCP/dsu"/>
</dbReference>
<dbReference type="NCBIfam" id="TIGR01145">
    <property type="entry name" value="ATP_synt_delta"/>
    <property type="match status" value="1"/>
</dbReference>
<dbReference type="NCBIfam" id="NF004402">
    <property type="entry name" value="PRK05758.2-2"/>
    <property type="match status" value="1"/>
</dbReference>
<dbReference type="PANTHER" id="PTHR11910">
    <property type="entry name" value="ATP SYNTHASE DELTA CHAIN"/>
    <property type="match status" value="1"/>
</dbReference>
<dbReference type="Pfam" id="PF00213">
    <property type="entry name" value="OSCP"/>
    <property type="match status" value="1"/>
</dbReference>
<dbReference type="PRINTS" id="PR00125">
    <property type="entry name" value="ATPASEDELTA"/>
</dbReference>
<dbReference type="SUPFAM" id="SSF47928">
    <property type="entry name" value="N-terminal domain of the delta subunit of the F1F0-ATP synthase"/>
    <property type="match status" value="1"/>
</dbReference>
<dbReference type="PROSITE" id="PS00389">
    <property type="entry name" value="ATPASE_DELTA"/>
    <property type="match status" value="1"/>
</dbReference>
<comment type="function">
    <text evidence="1">F(1)F(0) ATP synthase produces ATP from ADP in the presence of a proton or sodium gradient. F-type ATPases consist of two structural domains, F(1) containing the extramembraneous catalytic core and F(0) containing the membrane proton channel, linked together by a central stalk and a peripheral stalk. During catalysis, ATP synthesis in the catalytic domain of F(1) is coupled via a rotary mechanism of the central stalk subunits to proton translocation.</text>
</comment>
<comment type="function">
    <text evidence="1">This protein is part of the stalk that links CF(0) to CF(1). It either transmits conformational changes from CF(0) to CF(1) or is implicated in proton conduction.</text>
</comment>
<comment type="subunit">
    <text evidence="1">F-type ATPases have 2 components, F(1) - the catalytic core - and F(0) - the membrane proton channel. F(1) has five subunits: alpha(3), beta(3), gamma(1), delta(1), epsilon(1). F(0) has three main subunits: a(1), b(2) and c(10-14). The alpha and beta chains form an alternating ring which encloses part of the gamma chain. F(1) is attached to F(0) by a central stalk formed by the gamma and epsilon chains, while a peripheral stalk is formed by the delta and b chains.</text>
</comment>
<comment type="subcellular location">
    <subcellularLocation>
        <location evidence="1">Cell inner membrane</location>
        <topology evidence="1">Peripheral membrane protein</topology>
    </subcellularLocation>
</comment>
<comment type="similarity">
    <text evidence="1">Belongs to the ATPase delta chain family.</text>
</comment>
<sequence>MAELLTLARPYAKAAFAYASEQGATDNWSNALQVLSAAVQDEAFSAYLNRPELTPAEQVKLFAKVLGEDQSQAVSNFLTLLADNDRLVLLPEIAAEYEQLKSQNNNNVDVVIESAFPLTAEQEQLLKSALEKRFNSTVTVSVEVKPELIAGVVIRAGDQVIDDSALNKLEKMRTRLLA</sequence>
<keyword id="KW-0002">3D-structure</keyword>
<keyword id="KW-0066">ATP synthesis</keyword>
<keyword id="KW-0997">Cell inner membrane</keyword>
<keyword id="KW-1003">Cell membrane</keyword>
<keyword id="KW-0139">CF(1)</keyword>
<keyword id="KW-0375">Hydrogen ion transport</keyword>
<keyword id="KW-0406">Ion transport</keyword>
<keyword id="KW-0472">Membrane</keyword>
<keyword id="KW-0813">Transport</keyword>
<protein>
    <recommendedName>
        <fullName evidence="1">ATP synthase subunit delta</fullName>
    </recommendedName>
    <alternativeName>
        <fullName evidence="1">ATP synthase F(1) sector subunit delta</fullName>
    </alternativeName>
    <alternativeName>
        <fullName evidence="1">F-type ATPase subunit delta</fullName>
        <shortName evidence="1">F-ATPase subunit delta</shortName>
    </alternativeName>
</protein>
<proteinExistence type="evidence at protein level"/>
<evidence type="ECO:0000255" key="1">
    <source>
        <dbReference type="HAMAP-Rule" id="MF_01416"/>
    </source>
</evidence>
<evidence type="ECO:0007829" key="2">
    <source>
        <dbReference type="PDB" id="7P2Y"/>
    </source>
</evidence>